<proteinExistence type="evidence at protein level"/>
<sequence>MQGSTRRMGVMTDVHRRFLQLLMTHGVLEEWDVKRLQTHCYKVHDRNATVDKLEDFINNINSVLESLYIEIKRGVTEDDGRPIYALVNLATTSISKMATDFAENELDLFRKALELIIDSETGFASSTNILNLVDQLKGKKMRKKEAEQVLQKFVQNKWLIEKEGEFTLHGRAILEMEQYIRETYPDAVKICNICHSLLIQGQSCETCGIRMHLPCVAKYFQSNAEPRCPHCNDYWPHEIPKVFDPEKERESGVLKSNKKSLRSRQH</sequence>
<evidence type="ECO:0000255" key="1">
    <source>
        <dbReference type="PROSITE-ProRule" id="PRU00175"/>
    </source>
</evidence>
<evidence type="ECO:0000256" key="2">
    <source>
        <dbReference type="SAM" id="MobiDB-lite"/>
    </source>
</evidence>
<evidence type="ECO:0000269" key="3">
    <source>
    </source>
</evidence>
<evidence type="ECO:0000269" key="4">
    <source>
    </source>
</evidence>
<evidence type="ECO:0000269" key="5">
    <source>
    </source>
</evidence>
<evidence type="ECO:0000269" key="6">
    <source>
    </source>
</evidence>
<evidence type="ECO:0000269" key="7">
    <source>
    </source>
</evidence>
<evidence type="ECO:0000305" key="8"/>
<evidence type="ECO:0000305" key="9">
    <source>
    </source>
</evidence>
<evidence type="ECO:0000312" key="10">
    <source>
        <dbReference type="HGNC" id="HGNC:29897"/>
    </source>
</evidence>
<evidence type="ECO:0007744" key="11">
    <source>
    </source>
</evidence>
<evidence type="ECO:0007829" key="12">
    <source>
        <dbReference type="PDB" id="5HVQ"/>
    </source>
</evidence>
<evidence type="ECO:0007829" key="13">
    <source>
        <dbReference type="PDB" id="5WY5"/>
    </source>
</evidence>
<gene>
    <name evidence="10" type="primary">NSMCE1</name>
    <name type="ORF">HSPC333</name>
    <name type="ORF">HSPC337</name>
</gene>
<protein>
    <recommendedName>
        <fullName>Non-structural maintenance of chromosomes element 1 homolog</fullName>
        <shortName>Non-SMC element 1 homolog</shortName>
        <ecNumber evidence="5 7">2.3.2.27</ecNumber>
    </recommendedName>
</protein>
<reference key="1">
    <citation type="journal article" date="2000" name="Genome Res.">
        <title>Cloning and functional analysis of cDNAs with open reading frames for 300 previously undefined genes expressed in CD34+ hematopoietic stem/progenitor cells.</title>
        <authorList>
            <person name="Zhang Q.-H."/>
            <person name="Ye M."/>
            <person name="Wu X.-Y."/>
            <person name="Ren S.-X."/>
            <person name="Zhao M."/>
            <person name="Zhao C.-J."/>
            <person name="Fu G."/>
            <person name="Shen Y."/>
            <person name="Fan H.-Y."/>
            <person name="Lu G."/>
            <person name="Zhong M."/>
            <person name="Xu X.-R."/>
            <person name="Han Z.-G."/>
            <person name="Zhang J.-W."/>
            <person name="Tao J."/>
            <person name="Huang Q.-H."/>
            <person name="Zhou J."/>
            <person name="Hu G.-X."/>
            <person name="Gu J."/>
            <person name="Chen S.-J."/>
            <person name="Chen Z."/>
        </authorList>
    </citation>
    <scope>NUCLEOTIDE SEQUENCE [LARGE SCALE MRNA]</scope>
    <source>
        <tissue>Umbilical cord blood</tissue>
    </source>
</reference>
<reference key="2">
    <citation type="journal article" date="2004" name="Nature">
        <title>The sequence and analysis of duplication-rich human chromosome 16.</title>
        <authorList>
            <person name="Martin J."/>
            <person name="Han C."/>
            <person name="Gordon L.A."/>
            <person name="Terry A."/>
            <person name="Prabhakar S."/>
            <person name="She X."/>
            <person name="Xie G."/>
            <person name="Hellsten U."/>
            <person name="Chan Y.M."/>
            <person name="Altherr M."/>
            <person name="Couronne O."/>
            <person name="Aerts A."/>
            <person name="Bajorek E."/>
            <person name="Black S."/>
            <person name="Blumer H."/>
            <person name="Branscomb E."/>
            <person name="Brown N.C."/>
            <person name="Bruno W.J."/>
            <person name="Buckingham J.M."/>
            <person name="Callen D.F."/>
            <person name="Campbell C.S."/>
            <person name="Campbell M.L."/>
            <person name="Campbell E.W."/>
            <person name="Caoile C."/>
            <person name="Challacombe J.F."/>
            <person name="Chasteen L.A."/>
            <person name="Chertkov O."/>
            <person name="Chi H.C."/>
            <person name="Christensen M."/>
            <person name="Clark L.M."/>
            <person name="Cohn J.D."/>
            <person name="Denys M."/>
            <person name="Detter J.C."/>
            <person name="Dickson M."/>
            <person name="Dimitrijevic-Bussod M."/>
            <person name="Escobar J."/>
            <person name="Fawcett J.J."/>
            <person name="Flowers D."/>
            <person name="Fotopulos D."/>
            <person name="Glavina T."/>
            <person name="Gomez M."/>
            <person name="Gonzales E."/>
            <person name="Goodstein D."/>
            <person name="Goodwin L.A."/>
            <person name="Grady D.L."/>
            <person name="Grigoriev I."/>
            <person name="Groza M."/>
            <person name="Hammon N."/>
            <person name="Hawkins T."/>
            <person name="Haydu L."/>
            <person name="Hildebrand C.E."/>
            <person name="Huang W."/>
            <person name="Israni S."/>
            <person name="Jett J."/>
            <person name="Jewett P.B."/>
            <person name="Kadner K."/>
            <person name="Kimball H."/>
            <person name="Kobayashi A."/>
            <person name="Krawczyk M.-C."/>
            <person name="Leyba T."/>
            <person name="Longmire J.L."/>
            <person name="Lopez F."/>
            <person name="Lou Y."/>
            <person name="Lowry S."/>
            <person name="Ludeman T."/>
            <person name="Manohar C.F."/>
            <person name="Mark G.A."/>
            <person name="McMurray K.L."/>
            <person name="Meincke L.J."/>
            <person name="Morgan J."/>
            <person name="Moyzis R.K."/>
            <person name="Mundt M.O."/>
            <person name="Munk A.C."/>
            <person name="Nandkeshwar R.D."/>
            <person name="Pitluck S."/>
            <person name="Pollard M."/>
            <person name="Predki P."/>
            <person name="Parson-Quintana B."/>
            <person name="Ramirez L."/>
            <person name="Rash S."/>
            <person name="Retterer J."/>
            <person name="Ricke D.O."/>
            <person name="Robinson D.L."/>
            <person name="Rodriguez A."/>
            <person name="Salamov A."/>
            <person name="Saunders E.H."/>
            <person name="Scott D."/>
            <person name="Shough T."/>
            <person name="Stallings R.L."/>
            <person name="Stalvey M."/>
            <person name="Sutherland R.D."/>
            <person name="Tapia R."/>
            <person name="Tesmer J.G."/>
            <person name="Thayer N."/>
            <person name="Thompson L.S."/>
            <person name="Tice H."/>
            <person name="Torney D.C."/>
            <person name="Tran-Gyamfi M."/>
            <person name="Tsai M."/>
            <person name="Ulanovsky L.E."/>
            <person name="Ustaszewska A."/>
            <person name="Vo N."/>
            <person name="White P.S."/>
            <person name="Williams A.L."/>
            <person name="Wills P.L."/>
            <person name="Wu J.-R."/>
            <person name="Wu K."/>
            <person name="Yang J."/>
            <person name="DeJong P."/>
            <person name="Bruce D."/>
            <person name="Doggett N.A."/>
            <person name="Deaven L."/>
            <person name="Schmutz J."/>
            <person name="Grimwood J."/>
            <person name="Richardson P."/>
            <person name="Rokhsar D.S."/>
            <person name="Eichler E.E."/>
            <person name="Gilna P."/>
            <person name="Lucas S.M."/>
            <person name="Myers R.M."/>
            <person name="Rubin E.M."/>
            <person name="Pennacchio L.A."/>
        </authorList>
    </citation>
    <scope>NUCLEOTIDE SEQUENCE [LARGE SCALE GENOMIC DNA]</scope>
</reference>
<reference key="3">
    <citation type="submission" date="2005-09" db="EMBL/GenBank/DDBJ databases">
        <authorList>
            <person name="Mural R.J."/>
            <person name="Istrail S."/>
            <person name="Sutton G.G."/>
            <person name="Florea L."/>
            <person name="Halpern A.L."/>
            <person name="Mobarry C.M."/>
            <person name="Lippert R."/>
            <person name="Walenz B."/>
            <person name="Shatkay H."/>
            <person name="Dew I."/>
            <person name="Miller J.R."/>
            <person name="Flanigan M.J."/>
            <person name="Edwards N.J."/>
            <person name="Bolanos R."/>
            <person name="Fasulo D."/>
            <person name="Halldorsson B.V."/>
            <person name="Hannenhalli S."/>
            <person name="Turner R."/>
            <person name="Yooseph S."/>
            <person name="Lu F."/>
            <person name="Nusskern D.R."/>
            <person name="Shue B.C."/>
            <person name="Zheng X.H."/>
            <person name="Zhong F."/>
            <person name="Delcher A.L."/>
            <person name="Huson D.H."/>
            <person name="Kravitz S.A."/>
            <person name="Mouchard L."/>
            <person name="Reinert K."/>
            <person name="Remington K.A."/>
            <person name="Clark A.G."/>
            <person name="Waterman M.S."/>
            <person name="Eichler E.E."/>
            <person name="Adams M.D."/>
            <person name="Hunkapiller M.W."/>
            <person name="Myers E.W."/>
            <person name="Venter J.C."/>
        </authorList>
    </citation>
    <scope>NUCLEOTIDE SEQUENCE [LARGE SCALE GENOMIC DNA]</scope>
</reference>
<reference key="4">
    <citation type="journal article" date="2004" name="Genome Res.">
        <title>The status, quality, and expansion of the NIH full-length cDNA project: the Mammalian Gene Collection (MGC).</title>
        <authorList>
            <consortium name="The MGC Project Team"/>
        </authorList>
    </citation>
    <scope>NUCLEOTIDE SEQUENCE [LARGE SCALE MRNA] OF 7-266</scope>
    <scope>VARIANT SER-47</scope>
    <source>
        <tissue>Pancreas</tissue>
    </source>
</reference>
<reference key="5">
    <citation type="journal article" date="2004" name="Mol. Cell. Biol.">
        <title>Coordination of DNA damage responses via the Smc5/Smc6 complex.</title>
        <authorList>
            <person name="Harvey S.H."/>
            <person name="Sheedy D.M."/>
            <person name="Cuddihy A.R."/>
            <person name="O'Connell M.J."/>
        </authorList>
    </citation>
    <scope>INTERACTION WITH SMC6</scope>
</reference>
<reference key="6">
    <citation type="journal article" date="2008" name="Mol. Cell. Biol.">
        <title>Identification of the proteins, including MAGEG1, that make up the human SMC5-6 protein complex.</title>
        <authorList>
            <person name="Taylor E.M."/>
            <person name="Copsey A.C."/>
            <person name="Hudson J.J."/>
            <person name="Vidot S."/>
            <person name="Lehmann A.R."/>
        </authorList>
    </citation>
    <scope>FUNCTION</scope>
    <scope>SUBCELLULAR LOCATION</scope>
    <scope>UBIQUITINATION</scope>
    <scope>INTERACTION WITH SMC6; NSMCE2; NSMCE4A AND NSMCE3</scope>
    <scope>IDENTIFICATION IN THE SMC5-SMC6 COMPLEX</scope>
</reference>
<reference key="7">
    <citation type="journal article" date="2011" name="BMC Syst. Biol.">
        <title>Initial characterization of the human central proteome.</title>
        <authorList>
            <person name="Burkard T.R."/>
            <person name="Planyavsky M."/>
            <person name="Kaupe I."/>
            <person name="Breitwieser F.P."/>
            <person name="Buerckstuemmer T."/>
            <person name="Bennett K.L."/>
            <person name="Superti-Furga G."/>
            <person name="Colinge J."/>
        </authorList>
    </citation>
    <scope>IDENTIFICATION BY MASS SPECTROMETRY [LARGE SCALE ANALYSIS]</scope>
</reference>
<reference key="8">
    <citation type="journal article" date="2011" name="PLoS ONE">
        <title>Interactions between the Nse3 and Nse4 components of the SMC5-6 complex identify evolutionarily conserved interactions between MAGE and EID Families.</title>
        <authorList>
            <person name="Hudson J.J."/>
            <person name="Bednarova K."/>
            <person name="Kozakova L."/>
            <person name="Liao C."/>
            <person name="Guerineau M."/>
            <person name="Colnaghi R."/>
            <person name="Vidot S."/>
            <person name="Marek J."/>
            <person name="Bathula S.R."/>
            <person name="Lehmann A.R."/>
            <person name="Palecek J."/>
        </authorList>
    </citation>
    <scope>INTERACTION WITH NSMCE3</scope>
</reference>
<reference key="9">
    <citation type="journal article" date="2013" name="J. Proteome Res.">
        <title>Toward a comprehensive characterization of a human cancer cell phosphoproteome.</title>
        <authorList>
            <person name="Zhou H."/>
            <person name="Di Palma S."/>
            <person name="Preisinger C."/>
            <person name="Peng M."/>
            <person name="Polat A.N."/>
            <person name="Heck A.J."/>
            <person name="Mohammed S."/>
        </authorList>
    </citation>
    <scope>PHOSPHORYLATION [LARGE SCALE ANALYSIS] AT SER-251</scope>
    <scope>IDENTIFICATION BY MASS SPECTROMETRY [LARGE SCALE ANALYSIS]</scope>
    <source>
        <tissue>Cervix carcinoma</tissue>
    </source>
</reference>
<reference key="10">
    <citation type="journal article" date="2016" name="J. Clin. Invest.">
        <title>Destabilized SMC5/6 complex leads to chromosome breakage syndrome with severe lung disease.</title>
        <authorList>
            <person name="van der Crabben S.N."/>
            <person name="Hennus M.P."/>
            <person name="McGregor G.A."/>
            <person name="Ritter D.I."/>
            <person name="Nagamani S.C."/>
            <person name="Wells O.S."/>
            <person name="Harakalova M."/>
            <person name="Chinn I.K."/>
            <person name="Alt A."/>
            <person name="Vondrova L."/>
            <person name="Hochstenbach R."/>
            <person name="van Montfrans J.M."/>
            <person name="Terheggen-Lagro S.W."/>
            <person name="van Lieshout S."/>
            <person name="van Roosmalen M.J."/>
            <person name="Renkens I."/>
            <person name="Duran K."/>
            <person name="Nijman I.J."/>
            <person name="Kloosterman W.P."/>
            <person name="Hennekam E."/>
            <person name="Orange J.S."/>
            <person name="van Hasselt P.M."/>
            <person name="Wheeler D.A."/>
            <person name="Palecek J.J."/>
            <person name="Lehmann A.R."/>
            <person name="Oliver A.W."/>
            <person name="Pearl L.H."/>
            <person name="Plon S.E."/>
            <person name="Murray J.M."/>
            <person name="van Haaften G."/>
        </authorList>
    </citation>
    <scope>INTERACTION WITH NSMCE3</scope>
</reference>
<reference key="11">
    <citation type="journal article" date="2018" name="Mol. Cell">
        <title>Cytosolic Iron-Sulfur Assembly Is Evolutionarily Tuned by a Cancer-Amplified Ubiquitin Ligase.</title>
        <authorList>
            <person name="Weon J.L."/>
            <person name="Yang S.W."/>
            <person name="Potts P.R."/>
        </authorList>
    </citation>
    <scope>FUNCTION</scope>
    <scope>INTERACTION WITH MAGEF1</scope>
    <scope>CATALYTIC ACTIVITY</scope>
</reference>
<reference key="12">
    <citation type="submission" date="2005-11" db="PDB data bank">
        <title>Solution structure of the RING domain of the non-SMC element 1 protein.</title>
        <authorList>
            <consortium name="RIKEN structural genomics initiative (RSGI)"/>
        </authorList>
    </citation>
    <scope>STRUCTURE BY NMR OF 181-241</scope>
    <scope>ZINC-BINDING</scope>
</reference>
<reference key="13">
    <citation type="journal article" date="2010" name="Mol. Cell">
        <title>MAGE-RING protein complexes comprise a family of E3 ubiquitin ligases.</title>
        <authorList>
            <person name="Doyle J.M."/>
            <person name="Gao J."/>
            <person name="Wang J."/>
            <person name="Yang M."/>
            <person name="Potts P.R."/>
        </authorList>
    </citation>
    <scope>X-RAY CRYSTALLOGRAPHY (2.92 ANGSTROMS) OF 9-246 IN COMPLEX WITH NSMCE3</scope>
    <scope>FUNCTION</scope>
    <scope>CATALYTIC ACTIVITY</scope>
</reference>
<comment type="function">
    <text evidence="4 5 7">RING-type zinc finger-containing E3 ubiquitin ligase that assembles with melanoma antigen protein (MAGE) to catalyze the direct transfer of ubiquitin from E2 ubiquitin-conjugating enzyme to a specific substrate. Within MAGE-RING ubiquitin ligase complex, MAGE stimulates and specifies ubiquitin ligase activity likely through recruitment and/or stabilization of the E2 ubiquitin-conjugating enzyme at the E3:substrate complex. Involved in maintenance of genome integrity, DNA damage response and DNA repair (PubMed:20864041, PubMed:29225034). NSMCE3/MAGEG1 and NSMCE1 ubiquitin ligase are components of SMC5-SMC6 complex and may positively regulate homologous recombination-mediated DNA repair (PubMed:18086888). MAGEF1-NSMCE1 ubiquitin ligase promotes proteasomal degradation of MMS19, a key component of the cytosolic iron-sulfur protein assembly (CIA) machinery. Down-regulation of MMS19 impairs the activity of several DNA repair and metabolism enzymes such as ERCC2/XPD, FANCJ, RTEL1 and POLD1 that require iron-sulfur clusters as cofactors (PubMed:29225034).</text>
</comment>
<comment type="catalytic activity">
    <reaction evidence="5 7">
        <text>S-ubiquitinyl-[E2 ubiquitin-conjugating enzyme]-L-cysteine + [acceptor protein]-L-lysine = [E2 ubiquitin-conjugating enzyme]-L-cysteine + N(6)-ubiquitinyl-[acceptor protein]-L-lysine.</text>
        <dbReference type="EC" id="2.3.2.27"/>
    </reaction>
</comment>
<comment type="subunit">
    <text evidence="4 5 6 7">Component of the SMC5-SMC6 complex which consists at least of SMC5, SMC6, NSMCE2, NSMCE1, NSMCE4A or EID3 and NSMCE3. NSMCE1, NSMCE4A or EID3 and NSMCE3 probably form a subcomplex that bridges the head domains of the SMC5-SMC6 heterodimer (PubMed:18086888, PubMed:20864041). Interacts with NSMCE3 (PubMed:27427983). Interacts with MAGEF1 (PubMed:29225034).</text>
</comment>
<comment type="interaction">
    <interactant intactId="EBI-2557372">
        <id>Q8WV22</id>
    </interactant>
    <interactant intactId="EBI-5525855">
        <id>Q9HAY2</id>
        <label>MAGEF1</label>
    </interactant>
    <organismsDiffer>false</organismsDiffer>
    <experiments>2</experiments>
</comment>
<comment type="interaction">
    <interactant intactId="EBI-2557372">
        <id>Q8WV22</id>
    </interactant>
    <interactant intactId="EBI-2557356">
        <id>Q96MG7</id>
        <label>NSMCE3</label>
    </interactant>
    <organismsDiffer>false</organismsDiffer>
    <experiments>22</experiments>
</comment>
<comment type="interaction">
    <interactant intactId="EBI-2557372">
        <id>Q8WV22</id>
    </interactant>
    <interactant intactId="EBI-605415">
        <id>Q96SB8</id>
        <label>SMC6</label>
    </interactant>
    <organismsDiffer>false</organismsDiffer>
    <experiments>11</experiments>
</comment>
<comment type="subcellular location">
    <subcellularLocation>
        <location evidence="4">Nucleus</location>
    </subcellularLocation>
    <subcellularLocation>
        <location evidence="9">Chromosome</location>
        <location evidence="9">Telomere</location>
    </subcellularLocation>
</comment>
<comment type="PTM">
    <text evidence="4">Ubiquitinated.</text>
</comment>
<comment type="similarity">
    <text evidence="8">Belongs to the NSE1 family.</text>
</comment>
<comment type="sequence caution" evidence="8">
    <conflict type="frameshift">
        <sequence resource="EMBL-CDS" id="AAF29011"/>
    </conflict>
</comment>
<comment type="sequence caution" evidence="8">
    <conflict type="frameshift">
        <sequence resource="EMBL-CDS" id="AAF29015"/>
    </conflict>
</comment>
<feature type="chain" id="PRO_0000270944" description="Non-structural maintenance of chromosomes element 1 homolog">
    <location>
        <begin position="1"/>
        <end position="266"/>
    </location>
</feature>
<feature type="zinc finger region" description="RING-type; atypical" evidence="1">
    <location>
        <begin position="191"/>
        <end position="232"/>
    </location>
</feature>
<feature type="region of interest" description="Interaction with NSMCE3" evidence="5">
    <location>
        <begin position="1"/>
        <end position="102"/>
    </location>
</feature>
<feature type="region of interest" description="Disordered" evidence="2">
    <location>
        <begin position="246"/>
        <end position="266"/>
    </location>
</feature>
<feature type="compositionally biased region" description="Basic residues" evidence="2">
    <location>
        <begin position="256"/>
        <end position="266"/>
    </location>
</feature>
<feature type="modified residue" description="Phosphoserine" evidence="11">
    <location>
        <position position="251"/>
    </location>
</feature>
<feature type="sequence variant" id="VAR_029822" description="In dbSNP:rs7195194.">
    <original>T</original>
    <variation>R</variation>
    <location>
        <position position="38"/>
    </location>
</feature>
<feature type="sequence variant" id="VAR_029823" description="In dbSNP:rs17856580." evidence="3">
    <original>N</original>
    <variation>S</variation>
    <location>
        <position position="47"/>
    </location>
</feature>
<feature type="helix" evidence="13">
    <location>
        <begin position="13"/>
        <end position="24"/>
    </location>
</feature>
<feature type="strand" evidence="13">
    <location>
        <begin position="25"/>
        <end position="29"/>
    </location>
</feature>
<feature type="helix" evidence="13">
    <location>
        <begin position="30"/>
        <end position="43"/>
    </location>
</feature>
<feature type="helix" evidence="13">
    <location>
        <begin position="53"/>
        <end position="64"/>
    </location>
</feature>
<feature type="helix" evidence="13">
    <location>
        <begin position="65"/>
        <end position="67"/>
    </location>
</feature>
<feature type="strand" evidence="13">
    <location>
        <begin position="69"/>
        <end position="75"/>
    </location>
</feature>
<feature type="turn" evidence="13">
    <location>
        <begin position="77"/>
        <end position="79"/>
    </location>
</feature>
<feature type="strand" evidence="13">
    <location>
        <begin position="82"/>
        <end position="91"/>
    </location>
</feature>
<feature type="helix" evidence="13">
    <location>
        <begin position="95"/>
        <end position="98"/>
    </location>
</feature>
<feature type="helix" evidence="13">
    <location>
        <begin position="103"/>
        <end position="118"/>
    </location>
</feature>
<feature type="strand" evidence="13">
    <location>
        <begin position="119"/>
        <end position="122"/>
    </location>
</feature>
<feature type="helix" evidence="13">
    <location>
        <begin position="126"/>
        <end position="130"/>
    </location>
</feature>
<feature type="helix" evidence="13">
    <location>
        <begin position="131"/>
        <end position="133"/>
    </location>
</feature>
<feature type="strand" evidence="13">
    <location>
        <begin position="137"/>
        <end position="139"/>
    </location>
</feature>
<feature type="helix" evidence="13">
    <location>
        <begin position="143"/>
        <end position="155"/>
    </location>
</feature>
<feature type="strand" evidence="13">
    <location>
        <begin position="158"/>
        <end position="162"/>
    </location>
</feature>
<feature type="strand" evidence="13">
    <location>
        <begin position="165"/>
        <end position="168"/>
    </location>
</feature>
<feature type="helix" evidence="13">
    <location>
        <begin position="170"/>
        <end position="183"/>
    </location>
</feature>
<feature type="turn" evidence="13">
    <location>
        <begin position="185"/>
        <end position="187"/>
    </location>
</feature>
<feature type="strand" evidence="12">
    <location>
        <begin position="189"/>
        <end position="191"/>
    </location>
</feature>
<feature type="turn" evidence="13">
    <location>
        <begin position="192"/>
        <end position="194"/>
    </location>
</feature>
<feature type="strand" evidence="12">
    <location>
        <begin position="197"/>
        <end position="200"/>
    </location>
</feature>
<feature type="strand" evidence="13">
    <location>
        <begin position="205"/>
        <end position="207"/>
    </location>
</feature>
<feature type="helix" evidence="13">
    <location>
        <begin position="213"/>
        <end position="219"/>
    </location>
</feature>
<feature type="turn" evidence="13">
    <location>
        <begin position="220"/>
        <end position="222"/>
    </location>
</feature>
<feature type="turn" evidence="13">
    <location>
        <begin position="229"/>
        <end position="231"/>
    </location>
</feature>
<accession>Q8WV22</accession>
<accession>D3DWF6</accession>
<accession>Q9P045</accession>
<accession>Q9P049</accession>
<organism>
    <name type="scientific">Homo sapiens</name>
    <name type="common">Human</name>
    <dbReference type="NCBI Taxonomy" id="9606"/>
    <lineage>
        <taxon>Eukaryota</taxon>
        <taxon>Metazoa</taxon>
        <taxon>Chordata</taxon>
        <taxon>Craniata</taxon>
        <taxon>Vertebrata</taxon>
        <taxon>Euteleostomi</taxon>
        <taxon>Mammalia</taxon>
        <taxon>Eutheria</taxon>
        <taxon>Euarchontoglires</taxon>
        <taxon>Primates</taxon>
        <taxon>Haplorrhini</taxon>
        <taxon>Catarrhini</taxon>
        <taxon>Hominidae</taxon>
        <taxon>Homo</taxon>
    </lineage>
</organism>
<keyword id="KW-0002">3D-structure</keyword>
<keyword id="KW-0158">Chromosome</keyword>
<keyword id="KW-0227">DNA damage</keyword>
<keyword id="KW-0233">DNA recombination</keyword>
<keyword id="KW-0234">DNA repair</keyword>
<keyword id="KW-0479">Metal-binding</keyword>
<keyword id="KW-0539">Nucleus</keyword>
<keyword id="KW-0597">Phosphoprotein</keyword>
<keyword id="KW-1267">Proteomics identification</keyword>
<keyword id="KW-1185">Reference proteome</keyword>
<keyword id="KW-0779">Telomere</keyword>
<keyword id="KW-0808">Transferase</keyword>
<keyword id="KW-0832">Ubl conjugation</keyword>
<keyword id="KW-0833">Ubl conjugation pathway</keyword>
<keyword id="KW-0862">Zinc</keyword>
<keyword id="KW-0863">Zinc-finger</keyword>
<name>NSE1_HUMAN</name>
<dbReference type="EC" id="2.3.2.27" evidence="5 7"/>
<dbReference type="EMBL" id="AF161451">
    <property type="protein sequence ID" value="AAF29011.1"/>
    <property type="status" value="ALT_SEQ"/>
    <property type="molecule type" value="mRNA"/>
</dbReference>
<dbReference type="EMBL" id="AF161455">
    <property type="protein sequence ID" value="AAF29015.1"/>
    <property type="status" value="ALT_SEQ"/>
    <property type="molecule type" value="mRNA"/>
</dbReference>
<dbReference type="EMBL" id="AC106739">
    <property type="status" value="NOT_ANNOTATED_CDS"/>
    <property type="molecule type" value="Genomic_DNA"/>
</dbReference>
<dbReference type="EMBL" id="CH471145">
    <property type="protein sequence ID" value="EAW55756.1"/>
    <property type="molecule type" value="Genomic_DNA"/>
</dbReference>
<dbReference type="EMBL" id="CH471145">
    <property type="protein sequence ID" value="EAW55757.1"/>
    <property type="molecule type" value="Genomic_DNA"/>
</dbReference>
<dbReference type="EMBL" id="BC018938">
    <property type="protein sequence ID" value="AAH18938.4"/>
    <property type="molecule type" value="mRNA"/>
</dbReference>
<dbReference type="CCDS" id="CCDS10628.2"/>
<dbReference type="RefSeq" id="NP_659547.2">
    <property type="nucleotide sequence ID" value="NM_145080.4"/>
</dbReference>
<dbReference type="RefSeq" id="XP_006721086.1">
    <property type="nucleotide sequence ID" value="XM_006721023.5"/>
</dbReference>
<dbReference type="RefSeq" id="XP_054235780.1">
    <property type="nucleotide sequence ID" value="XM_054379805.1"/>
</dbReference>
<dbReference type="PDB" id="2CT0">
    <property type="method" value="NMR"/>
    <property type="chains" value="A=181-241"/>
</dbReference>
<dbReference type="PDB" id="5HVQ">
    <property type="method" value="X-ray"/>
    <property type="resolution" value="2.92 A"/>
    <property type="chains" value="C=9-246"/>
</dbReference>
<dbReference type="PDB" id="5WY5">
    <property type="method" value="X-ray"/>
    <property type="resolution" value="2.92 A"/>
    <property type="chains" value="A=9-246"/>
</dbReference>
<dbReference type="PDBsum" id="2CT0"/>
<dbReference type="PDBsum" id="5HVQ"/>
<dbReference type="PDBsum" id="5WY5"/>
<dbReference type="BMRB" id="Q8WV22"/>
<dbReference type="SMR" id="Q8WV22"/>
<dbReference type="BioGRID" id="128255">
    <property type="interactions" value="48"/>
</dbReference>
<dbReference type="ComplexPortal" id="CPX-5992">
    <property type="entry name" value="SMC5-SMC6 SUMO ligase complex, EID3 variant"/>
</dbReference>
<dbReference type="ComplexPortal" id="CPX-6086">
    <property type="entry name" value="SMC5-SMC6 SUMO ligase complex, NSE4EA variant"/>
</dbReference>
<dbReference type="CORUM" id="Q8WV22"/>
<dbReference type="FunCoup" id="Q8WV22">
    <property type="interactions" value="2268"/>
</dbReference>
<dbReference type="IntAct" id="Q8WV22">
    <property type="interactions" value="24"/>
</dbReference>
<dbReference type="STRING" id="9606.ENSP00000355077"/>
<dbReference type="iPTMnet" id="Q8WV22"/>
<dbReference type="PhosphoSitePlus" id="Q8WV22"/>
<dbReference type="BioMuta" id="NSMCE1"/>
<dbReference type="DMDM" id="209572785"/>
<dbReference type="jPOST" id="Q8WV22"/>
<dbReference type="MassIVE" id="Q8WV22"/>
<dbReference type="PaxDb" id="9606-ENSP00000355077"/>
<dbReference type="PeptideAtlas" id="Q8WV22"/>
<dbReference type="ProteomicsDB" id="74738"/>
<dbReference type="Pumba" id="Q8WV22"/>
<dbReference type="Antibodypedia" id="26234">
    <property type="antibodies" value="114 antibodies from 21 providers"/>
</dbReference>
<dbReference type="DNASU" id="197370"/>
<dbReference type="Ensembl" id="ENST00000361439.9">
    <property type="protein sequence ID" value="ENSP00000355077.4"/>
    <property type="gene ID" value="ENSG00000169189.17"/>
</dbReference>
<dbReference type="GeneID" id="197370"/>
<dbReference type="KEGG" id="hsa:197370"/>
<dbReference type="MANE-Select" id="ENST00000361439.9">
    <property type="protein sequence ID" value="ENSP00000355077.4"/>
    <property type="RefSeq nucleotide sequence ID" value="NM_145080.4"/>
    <property type="RefSeq protein sequence ID" value="NP_659547.2"/>
</dbReference>
<dbReference type="UCSC" id="uc002doi.2">
    <property type="organism name" value="human"/>
</dbReference>
<dbReference type="AGR" id="HGNC:29897"/>
<dbReference type="CTD" id="197370"/>
<dbReference type="DisGeNET" id="197370"/>
<dbReference type="GeneCards" id="NSMCE1"/>
<dbReference type="HGNC" id="HGNC:29897">
    <property type="gene designation" value="NSMCE1"/>
</dbReference>
<dbReference type="HPA" id="ENSG00000169189">
    <property type="expression patterns" value="Low tissue specificity"/>
</dbReference>
<dbReference type="MIM" id="617263">
    <property type="type" value="gene"/>
</dbReference>
<dbReference type="neXtProt" id="NX_Q8WV22"/>
<dbReference type="OpenTargets" id="ENSG00000169189"/>
<dbReference type="PharmGKB" id="PA134943761"/>
<dbReference type="VEuPathDB" id="HostDB:ENSG00000169189"/>
<dbReference type="eggNOG" id="KOG4718">
    <property type="taxonomic scope" value="Eukaryota"/>
</dbReference>
<dbReference type="GeneTree" id="ENSGT00390000009084"/>
<dbReference type="HOGENOM" id="CLU_045153_3_1_1"/>
<dbReference type="InParanoid" id="Q8WV22"/>
<dbReference type="OMA" id="WPGDKFV"/>
<dbReference type="OrthoDB" id="185455at2759"/>
<dbReference type="PAN-GO" id="Q8WV22">
    <property type="GO annotations" value="5 GO annotations based on evolutionary models"/>
</dbReference>
<dbReference type="PhylomeDB" id="Q8WV22"/>
<dbReference type="TreeFam" id="TF314721"/>
<dbReference type="PathwayCommons" id="Q8WV22"/>
<dbReference type="Reactome" id="R-HSA-3108214">
    <property type="pathway name" value="SUMOylation of DNA damage response and repair proteins"/>
</dbReference>
<dbReference type="SignaLink" id="Q8WV22"/>
<dbReference type="SIGNOR" id="Q8WV22"/>
<dbReference type="BioGRID-ORCS" id="197370">
    <property type="hits" value="531 hits in 1213 CRISPR screens"/>
</dbReference>
<dbReference type="CD-CODE" id="91857CE7">
    <property type="entry name" value="Nucleolus"/>
</dbReference>
<dbReference type="ChiTaRS" id="NSMCE1">
    <property type="organism name" value="human"/>
</dbReference>
<dbReference type="EvolutionaryTrace" id="Q8WV22"/>
<dbReference type="GenomeRNAi" id="197370"/>
<dbReference type="Pharos" id="Q8WV22">
    <property type="development level" value="Tdark"/>
</dbReference>
<dbReference type="PRO" id="PR:Q8WV22"/>
<dbReference type="Proteomes" id="UP000005640">
    <property type="component" value="Chromosome 16"/>
</dbReference>
<dbReference type="RNAct" id="Q8WV22">
    <property type="molecule type" value="protein"/>
</dbReference>
<dbReference type="Bgee" id="ENSG00000169189">
    <property type="expression patterns" value="Expressed in right testis and 184 other cell types or tissues"/>
</dbReference>
<dbReference type="ExpressionAtlas" id="Q8WV22">
    <property type="expression patterns" value="baseline and differential"/>
</dbReference>
<dbReference type="GO" id="GO:0000775">
    <property type="term" value="C:chromosome, centromeric region"/>
    <property type="evidence" value="ECO:0007669"/>
    <property type="project" value="Ensembl"/>
</dbReference>
<dbReference type="GO" id="GO:0000781">
    <property type="term" value="C:chromosome, telomeric region"/>
    <property type="evidence" value="ECO:0000303"/>
    <property type="project" value="ComplexPortal"/>
</dbReference>
<dbReference type="GO" id="GO:0043231">
    <property type="term" value="C:intracellular membrane-bounded organelle"/>
    <property type="evidence" value="ECO:0000314"/>
    <property type="project" value="HPA"/>
</dbReference>
<dbReference type="GO" id="GO:0097431">
    <property type="term" value="C:mitotic spindle pole"/>
    <property type="evidence" value="ECO:0007669"/>
    <property type="project" value="Ensembl"/>
</dbReference>
<dbReference type="GO" id="GO:0005654">
    <property type="term" value="C:nucleoplasm"/>
    <property type="evidence" value="ECO:0000314"/>
    <property type="project" value="HPA"/>
</dbReference>
<dbReference type="GO" id="GO:0005634">
    <property type="term" value="C:nucleus"/>
    <property type="evidence" value="ECO:0000318"/>
    <property type="project" value="GO_Central"/>
</dbReference>
<dbReference type="GO" id="GO:0030915">
    <property type="term" value="C:Smc5-Smc6 complex"/>
    <property type="evidence" value="ECO:0000314"/>
    <property type="project" value="UniProtKB"/>
</dbReference>
<dbReference type="GO" id="GO:0046983">
    <property type="term" value="F:protein dimerization activity"/>
    <property type="evidence" value="ECO:0000314"/>
    <property type="project" value="UniProtKB"/>
</dbReference>
<dbReference type="GO" id="GO:0061630">
    <property type="term" value="F:ubiquitin protein ligase activity"/>
    <property type="evidence" value="ECO:0000314"/>
    <property type="project" value="UniProtKB"/>
</dbReference>
<dbReference type="GO" id="GO:0004842">
    <property type="term" value="F:ubiquitin-protein transferase activity"/>
    <property type="evidence" value="ECO:0000318"/>
    <property type="project" value="GO_Central"/>
</dbReference>
<dbReference type="GO" id="GO:0008270">
    <property type="term" value="F:zinc ion binding"/>
    <property type="evidence" value="ECO:0007669"/>
    <property type="project" value="UniProtKB-KW"/>
</dbReference>
<dbReference type="GO" id="GO:0140588">
    <property type="term" value="P:chromatin looping"/>
    <property type="evidence" value="ECO:0000303"/>
    <property type="project" value="ComplexPortal"/>
</dbReference>
<dbReference type="GO" id="GO:0006974">
    <property type="term" value="P:DNA damage response"/>
    <property type="evidence" value="ECO:0000315"/>
    <property type="project" value="UniProtKB"/>
</dbReference>
<dbReference type="GO" id="GO:0000724">
    <property type="term" value="P:double-strand break repair via homologous recombination"/>
    <property type="evidence" value="ECO:0000318"/>
    <property type="project" value="GO_Central"/>
</dbReference>
<dbReference type="GO" id="GO:0016925">
    <property type="term" value="P:protein sumoylation"/>
    <property type="evidence" value="ECO:0000303"/>
    <property type="project" value="ComplexPortal"/>
</dbReference>
<dbReference type="GO" id="GO:0032204">
    <property type="term" value="P:regulation of telomere maintenance"/>
    <property type="evidence" value="ECO:0000303"/>
    <property type="project" value="ComplexPortal"/>
</dbReference>
<dbReference type="CDD" id="cd16493">
    <property type="entry name" value="RING-CH-C4HC3_NSE1"/>
    <property type="match status" value="1"/>
</dbReference>
<dbReference type="FunFam" id="1.10.10.10:FF:000270">
    <property type="entry name" value="Non-structural maintenance of chromosomes element 1 homolog"/>
    <property type="match status" value="1"/>
</dbReference>
<dbReference type="FunFam" id="3.90.1150.220:FF:000001">
    <property type="entry name" value="Non-structural maintenance of chromosomes element 1 homolog"/>
    <property type="match status" value="1"/>
</dbReference>
<dbReference type="FunFam" id="3.30.40.10:FF:000298">
    <property type="entry name" value="non-structural maintenance of chromosomes element 1 homolog"/>
    <property type="match status" value="1"/>
</dbReference>
<dbReference type="Gene3D" id="3.90.1150.220">
    <property type="match status" value="1"/>
</dbReference>
<dbReference type="Gene3D" id="1.10.10.10">
    <property type="entry name" value="Winged helix-like DNA-binding domain superfamily/Winged helix DNA-binding domain"/>
    <property type="match status" value="1"/>
</dbReference>
<dbReference type="Gene3D" id="3.30.40.10">
    <property type="entry name" value="Zinc/RING finger domain, C3HC4 (zinc finger)"/>
    <property type="match status" value="1"/>
</dbReference>
<dbReference type="InterPro" id="IPR011513">
    <property type="entry name" value="Nse1"/>
</dbReference>
<dbReference type="InterPro" id="IPR014857">
    <property type="entry name" value="Nse1_RING_C4HC3-type"/>
</dbReference>
<dbReference type="InterPro" id="IPR002219">
    <property type="entry name" value="PE/DAG-bd"/>
</dbReference>
<dbReference type="InterPro" id="IPR036388">
    <property type="entry name" value="WH-like_DNA-bd_sf"/>
</dbReference>
<dbReference type="InterPro" id="IPR001841">
    <property type="entry name" value="Znf_RING"/>
</dbReference>
<dbReference type="InterPro" id="IPR013083">
    <property type="entry name" value="Znf_RING/FYVE/PHD"/>
</dbReference>
<dbReference type="PANTHER" id="PTHR20973">
    <property type="entry name" value="NON-SMC ELEMENT 1-RELATED"/>
    <property type="match status" value="1"/>
</dbReference>
<dbReference type="PANTHER" id="PTHR20973:SF0">
    <property type="entry name" value="NON-STRUCTURAL MAINTENANCE OF CHROMOSOMES ELEMENT 1 HOMOLOG"/>
    <property type="match status" value="1"/>
</dbReference>
<dbReference type="Pfam" id="PF07574">
    <property type="entry name" value="SMC_Nse1"/>
    <property type="match status" value="1"/>
</dbReference>
<dbReference type="Pfam" id="PF08746">
    <property type="entry name" value="zf-RING-like"/>
    <property type="match status" value="1"/>
</dbReference>
<dbReference type="SUPFAM" id="SSF57850">
    <property type="entry name" value="RING/U-box"/>
    <property type="match status" value="1"/>
</dbReference>
<dbReference type="PROSITE" id="PS50089">
    <property type="entry name" value="ZF_RING_2"/>
    <property type="match status" value="1"/>
</dbReference>